<feature type="chain" id="PRO_0000151905" description="ATP phosphoribosyltransferase">
    <location>
        <begin position="1"/>
        <end position="213"/>
    </location>
</feature>
<gene>
    <name evidence="1" type="primary">hisG</name>
    <name type="ordered locus">CV_0610</name>
</gene>
<accession>Q7P0F7</accession>
<organism>
    <name type="scientific">Chromobacterium violaceum (strain ATCC 12472 / DSM 30191 / JCM 1249 / CCUG 213 / NBRC 12614 / NCIMB 9131 / NCTC 9757 / MK)</name>
    <dbReference type="NCBI Taxonomy" id="243365"/>
    <lineage>
        <taxon>Bacteria</taxon>
        <taxon>Pseudomonadati</taxon>
        <taxon>Pseudomonadota</taxon>
        <taxon>Betaproteobacteria</taxon>
        <taxon>Neisseriales</taxon>
        <taxon>Chromobacteriaceae</taxon>
        <taxon>Chromobacterium</taxon>
    </lineage>
</organism>
<evidence type="ECO:0000255" key="1">
    <source>
        <dbReference type="HAMAP-Rule" id="MF_01018"/>
    </source>
</evidence>
<reference key="1">
    <citation type="journal article" date="2003" name="Proc. Natl. Acad. Sci. U.S.A.">
        <title>The complete genome sequence of Chromobacterium violaceum reveals remarkable and exploitable bacterial adaptability.</title>
        <authorList>
            <person name="Vasconcelos A.T.R."/>
            <person name="de Almeida D.F."/>
            <person name="Hungria M."/>
            <person name="Guimaraes C.T."/>
            <person name="Antonio R.V."/>
            <person name="Almeida F.C."/>
            <person name="de Almeida L.G.P."/>
            <person name="de Almeida R."/>
            <person name="Alves-Gomes J.A."/>
            <person name="Andrade E.M."/>
            <person name="Araripe J."/>
            <person name="de Araujo M.F.F."/>
            <person name="Astolfi-Filho S."/>
            <person name="Azevedo V."/>
            <person name="Baptista A.J."/>
            <person name="Bataus L.A.M."/>
            <person name="Batista J.S."/>
            <person name="Belo A."/>
            <person name="van den Berg C."/>
            <person name="Bogo M."/>
            <person name="Bonatto S."/>
            <person name="Bordignon J."/>
            <person name="Brigido M.M."/>
            <person name="Brito C.A."/>
            <person name="Brocchi M."/>
            <person name="Burity H.A."/>
            <person name="Camargo A.A."/>
            <person name="Cardoso D.D.P."/>
            <person name="Carneiro N.P."/>
            <person name="Carraro D.M."/>
            <person name="Carvalho C.M.B."/>
            <person name="Cascardo J.C.M."/>
            <person name="Cavada B.S."/>
            <person name="Chueire L.M.O."/>
            <person name="Creczynski-Pasa T.B."/>
            <person name="Cunha-Junior N.C."/>
            <person name="Fagundes N."/>
            <person name="Falcao C.L."/>
            <person name="Fantinatti F."/>
            <person name="Farias I.P."/>
            <person name="Felipe M.S.S."/>
            <person name="Ferrari L.P."/>
            <person name="Ferro J.A."/>
            <person name="Ferro M.I.T."/>
            <person name="Franco G.R."/>
            <person name="Freitas N.S.A."/>
            <person name="Furlan L.R."/>
            <person name="Gazzinelli R.T."/>
            <person name="Gomes E.A."/>
            <person name="Goncalves P.R."/>
            <person name="Grangeiro T.B."/>
            <person name="Grattapaglia D."/>
            <person name="Grisard E.C."/>
            <person name="Hanna E.S."/>
            <person name="Jardim S.N."/>
            <person name="Laurino J."/>
            <person name="Leoi L.C.T."/>
            <person name="Lima L.F.A."/>
            <person name="Loureiro M.F."/>
            <person name="Lyra M.C.C.P."/>
            <person name="Madeira H.M.F."/>
            <person name="Manfio G.P."/>
            <person name="Maranhao A.Q."/>
            <person name="Martins W.S."/>
            <person name="di Mauro S.M.Z."/>
            <person name="de Medeiros S.R.B."/>
            <person name="Meissner R.V."/>
            <person name="Moreira M.A.M."/>
            <person name="Nascimento F.F."/>
            <person name="Nicolas M.F."/>
            <person name="Oliveira J.G."/>
            <person name="Oliveira S.C."/>
            <person name="Paixao R.F.C."/>
            <person name="Parente J.A."/>
            <person name="Pedrosa F.O."/>
            <person name="Pena S.D.J."/>
            <person name="Pereira J.O."/>
            <person name="Pereira M."/>
            <person name="Pinto L.S.R.C."/>
            <person name="Pinto L.S."/>
            <person name="Porto J.I.R."/>
            <person name="Potrich D.P."/>
            <person name="Ramalho-Neto C.E."/>
            <person name="Reis A.M.M."/>
            <person name="Rigo L.U."/>
            <person name="Rondinelli E."/>
            <person name="Santos E.B.P."/>
            <person name="Santos F.R."/>
            <person name="Schneider M.P.C."/>
            <person name="Seuanez H.N."/>
            <person name="Silva A.M.R."/>
            <person name="da Silva A.L.C."/>
            <person name="Silva D.W."/>
            <person name="Silva R."/>
            <person name="Simoes I.C."/>
            <person name="Simon D."/>
            <person name="Soares C.M.A."/>
            <person name="Soares R.B.A."/>
            <person name="Souza E.M."/>
            <person name="Souza K.R.L."/>
            <person name="Souza R.C."/>
            <person name="Steffens M.B.R."/>
            <person name="Steindel M."/>
            <person name="Teixeira S.R."/>
            <person name="Urmenyi T."/>
            <person name="Vettore A."/>
            <person name="Wassem R."/>
            <person name="Zaha A."/>
            <person name="Simpson A.J.G."/>
        </authorList>
    </citation>
    <scope>NUCLEOTIDE SEQUENCE [LARGE SCALE GENOMIC DNA]</scope>
    <source>
        <strain>ATCC 12472 / DSM 30191 / JCM 1249 / CCUG 213 / NBRC 12614 / NCIMB 9131 / NCTC 9757 / MK</strain>
    </source>
</reference>
<keyword id="KW-0028">Amino-acid biosynthesis</keyword>
<keyword id="KW-0067">ATP-binding</keyword>
<keyword id="KW-0963">Cytoplasm</keyword>
<keyword id="KW-0328">Glycosyltransferase</keyword>
<keyword id="KW-0368">Histidine biosynthesis</keyword>
<keyword id="KW-0547">Nucleotide-binding</keyword>
<keyword id="KW-1185">Reference proteome</keyword>
<keyword id="KW-0808">Transferase</keyword>
<dbReference type="EC" id="2.4.2.17" evidence="1"/>
<dbReference type="EMBL" id="AE016825">
    <property type="protein sequence ID" value="AAQ58286.1"/>
    <property type="molecule type" value="Genomic_DNA"/>
</dbReference>
<dbReference type="RefSeq" id="WP_011134165.1">
    <property type="nucleotide sequence ID" value="NC_005085.1"/>
</dbReference>
<dbReference type="SMR" id="Q7P0F7"/>
<dbReference type="STRING" id="243365.CV_0610"/>
<dbReference type="GeneID" id="66365484"/>
<dbReference type="KEGG" id="cvi:CV_0610"/>
<dbReference type="eggNOG" id="COG0040">
    <property type="taxonomic scope" value="Bacteria"/>
</dbReference>
<dbReference type="HOGENOM" id="CLU_038115_2_0_4"/>
<dbReference type="OrthoDB" id="9801867at2"/>
<dbReference type="UniPathway" id="UPA00031">
    <property type="reaction ID" value="UER00006"/>
</dbReference>
<dbReference type="Proteomes" id="UP000001424">
    <property type="component" value="Chromosome"/>
</dbReference>
<dbReference type="GO" id="GO:0005737">
    <property type="term" value="C:cytoplasm"/>
    <property type="evidence" value="ECO:0007669"/>
    <property type="project" value="UniProtKB-SubCell"/>
</dbReference>
<dbReference type="GO" id="GO:0005524">
    <property type="term" value="F:ATP binding"/>
    <property type="evidence" value="ECO:0007669"/>
    <property type="project" value="UniProtKB-KW"/>
</dbReference>
<dbReference type="GO" id="GO:0003879">
    <property type="term" value="F:ATP phosphoribosyltransferase activity"/>
    <property type="evidence" value="ECO:0007669"/>
    <property type="project" value="UniProtKB-UniRule"/>
</dbReference>
<dbReference type="GO" id="GO:0000105">
    <property type="term" value="P:L-histidine biosynthetic process"/>
    <property type="evidence" value="ECO:0007669"/>
    <property type="project" value="UniProtKB-UniRule"/>
</dbReference>
<dbReference type="CDD" id="cd13595">
    <property type="entry name" value="PBP2_HisGs"/>
    <property type="match status" value="1"/>
</dbReference>
<dbReference type="FunFam" id="3.40.190.10:FF:000011">
    <property type="entry name" value="ATP phosphoribosyltransferase"/>
    <property type="match status" value="1"/>
</dbReference>
<dbReference type="Gene3D" id="3.40.190.10">
    <property type="entry name" value="Periplasmic binding protein-like II"/>
    <property type="match status" value="2"/>
</dbReference>
<dbReference type="HAMAP" id="MF_01018">
    <property type="entry name" value="HisG_Short"/>
    <property type="match status" value="1"/>
</dbReference>
<dbReference type="InterPro" id="IPR013820">
    <property type="entry name" value="ATP_PRibTrfase_cat"/>
</dbReference>
<dbReference type="InterPro" id="IPR018198">
    <property type="entry name" value="ATP_PRibTrfase_CS"/>
</dbReference>
<dbReference type="InterPro" id="IPR001348">
    <property type="entry name" value="ATP_PRibTrfase_HisG"/>
</dbReference>
<dbReference type="InterPro" id="IPR024893">
    <property type="entry name" value="ATP_PRibTrfase_HisG_short"/>
</dbReference>
<dbReference type="NCBIfam" id="TIGR00070">
    <property type="entry name" value="hisG"/>
    <property type="match status" value="1"/>
</dbReference>
<dbReference type="PANTHER" id="PTHR21403:SF8">
    <property type="entry name" value="ATP PHOSPHORIBOSYLTRANSFERASE"/>
    <property type="match status" value="1"/>
</dbReference>
<dbReference type="PANTHER" id="PTHR21403">
    <property type="entry name" value="ATP PHOSPHORIBOSYLTRANSFERASE ATP-PRTASE"/>
    <property type="match status" value="1"/>
</dbReference>
<dbReference type="Pfam" id="PF01634">
    <property type="entry name" value="HisG"/>
    <property type="match status" value="1"/>
</dbReference>
<dbReference type="SUPFAM" id="SSF53850">
    <property type="entry name" value="Periplasmic binding protein-like II"/>
    <property type="match status" value="1"/>
</dbReference>
<dbReference type="PROSITE" id="PS01316">
    <property type="entry name" value="ATP_P_PHORIBOSYLTR"/>
    <property type="match status" value="1"/>
</dbReference>
<name>HIS1_CHRVO</name>
<protein>
    <recommendedName>
        <fullName evidence="1">ATP phosphoribosyltransferase</fullName>
        <shortName evidence="1">ATP-PRT</shortName>
        <shortName evidence="1">ATP-PRTase</shortName>
        <ecNumber evidence="1">2.4.2.17</ecNumber>
    </recommendedName>
</protein>
<comment type="function">
    <text evidence="1">Catalyzes the condensation of ATP and 5-phosphoribose 1-diphosphate to form N'-(5'-phosphoribosyl)-ATP (PR-ATP). Has a crucial role in the pathway because the rate of histidine biosynthesis seems to be controlled primarily by regulation of HisG enzymatic activity.</text>
</comment>
<comment type="catalytic activity">
    <reaction evidence="1">
        <text>1-(5-phospho-beta-D-ribosyl)-ATP + diphosphate = 5-phospho-alpha-D-ribose 1-diphosphate + ATP</text>
        <dbReference type="Rhea" id="RHEA:18473"/>
        <dbReference type="ChEBI" id="CHEBI:30616"/>
        <dbReference type="ChEBI" id="CHEBI:33019"/>
        <dbReference type="ChEBI" id="CHEBI:58017"/>
        <dbReference type="ChEBI" id="CHEBI:73183"/>
        <dbReference type="EC" id="2.4.2.17"/>
    </reaction>
</comment>
<comment type="pathway">
    <text evidence="1">Amino-acid biosynthesis; L-histidine biosynthesis; L-histidine from 5-phospho-alpha-D-ribose 1-diphosphate: step 1/9.</text>
</comment>
<comment type="subunit">
    <text evidence="1">Heteromultimer composed of HisG and HisZ subunits.</text>
</comment>
<comment type="subcellular location">
    <subcellularLocation>
        <location evidence="1">Cytoplasm</location>
    </subcellularLocation>
</comment>
<comment type="domain">
    <text>Lacks the C-terminal regulatory region which is replaced by HisZ.</text>
</comment>
<comment type="similarity">
    <text evidence="1">Belongs to the ATP phosphoribosyltransferase family. Short subfamily.</text>
</comment>
<sequence length="213" mass="22701">MKLTIALSKGRIFEETLPLLAAAGIVPAENPESSRKLIIGTNHPDVQLVIVRASDVPTYVQYGAADLGIAGRDVLIEHGGAGLYQPLDLNIAKCKMMVAVQEGFDYDAAVRRGARLKIATKYPQIAREHFAKKGVHVDIIKLYGSMELAPLVGLADAIVDLVSTGGTLRANKLAAVEHIIDISSRLVVNQAALKLKYDAIQPVLDAFAGAVPA</sequence>
<proteinExistence type="inferred from homology"/>